<organism>
    <name type="scientific">Syntrophotalea carbinolica (strain DSM 2380 / NBRC 103641 / GraBd1)</name>
    <name type="common">Pelobacter carbinolicus</name>
    <dbReference type="NCBI Taxonomy" id="338963"/>
    <lineage>
        <taxon>Bacteria</taxon>
        <taxon>Pseudomonadati</taxon>
        <taxon>Thermodesulfobacteriota</taxon>
        <taxon>Desulfuromonadia</taxon>
        <taxon>Desulfuromonadales</taxon>
        <taxon>Syntrophotaleaceae</taxon>
        <taxon>Syntrophotalea</taxon>
    </lineage>
</organism>
<keyword id="KW-0963">Cytoplasm</keyword>
<keyword id="KW-0396">Initiation factor</keyword>
<keyword id="KW-0648">Protein biosynthesis</keyword>
<keyword id="KW-1185">Reference proteome</keyword>
<keyword id="KW-0694">RNA-binding</keyword>
<keyword id="KW-0699">rRNA-binding</keyword>
<feature type="chain" id="PRO_0000263834" description="Translation initiation factor IF-1">
    <location>
        <begin position="1"/>
        <end position="72"/>
    </location>
</feature>
<feature type="domain" description="S1-like" evidence="1">
    <location>
        <begin position="1"/>
        <end position="72"/>
    </location>
</feature>
<comment type="function">
    <text evidence="1">One of the essential components for the initiation of protein synthesis. Stabilizes the binding of IF-2 and IF-3 on the 30S subunit to which N-formylmethionyl-tRNA(fMet) subsequently binds. Helps modulate mRNA selection, yielding the 30S pre-initiation complex (PIC). Upon addition of the 50S ribosomal subunit IF-1, IF-2 and IF-3 are released leaving the mature 70S translation initiation complex.</text>
</comment>
<comment type="subunit">
    <text evidence="1">Component of the 30S ribosomal translation pre-initiation complex which assembles on the 30S ribosome in the order IF-2 and IF-3, IF-1 and N-formylmethionyl-tRNA(fMet); mRNA recruitment can occur at any time during PIC assembly.</text>
</comment>
<comment type="subcellular location">
    <subcellularLocation>
        <location evidence="1">Cytoplasm</location>
    </subcellularLocation>
</comment>
<comment type="similarity">
    <text evidence="1">Belongs to the IF-1 family.</text>
</comment>
<gene>
    <name evidence="1" type="primary">infA</name>
    <name type="ordered locus">Pcar_1412</name>
</gene>
<sequence>MAKEEAIEVEGKVVEPLPNAMFRVKLDNGHTILAHISGKMRKFYIRILPGDRVTVELSPYDLTRGRITYREK</sequence>
<reference key="1">
    <citation type="submission" date="2005-10" db="EMBL/GenBank/DDBJ databases">
        <title>Complete sequence of Pelobacter carbinolicus DSM 2380.</title>
        <authorList>
            <person name="Copeland A."/>
            <person name="Lucas S."/>
            <person name="Lapidus A."/>
            <person name="Barry K."/>
            <person name="Detter J.C."/>
            <person name="Glavina T."/>
            <person name="Hammon N."/>
            <person name="Israni S."/>
            <person name="Pitluck S."/>
            <person name="Chertkov O."/>
            <person name="Schmutz J."/>
            <person name="Larimer F."/>
            <person name="Land M."/>
            <person name="Kyrpides N."/>
            <person name="Ivanova N."/>
            <person name="Richardson P."/>
        </authorList>
    </citation>
    <scope>NUCLEOTIDE SEQUENCE [LARGE SCALE GENOMIC DNA]</scope>
    <source>
        <strain>DSM 2380 / NBRC 103641 / GraBd1</strain>
    </source>
</reference>
<dbReference type="EMBL" id="CP000142">
    <property type="protein sequence ID" value="ABA88658.1"/>
    <property type="molecule type" value="Genomic_DNA"/>
</dbReference>
<dbReference type="RefSeq" id="WP_011341141.1">
    <property type="nucleotide sequence ID" value="NC_007498.2"/>
</dbReference>
<dbReference type="SMR" id="Q3A4P9"/>
<dbReference type="STRING" id="338963.Pcar_1412"/>
<dbReference type="KEGG" id="pca:Pcar_1412"/>
<dbReference type="eggNOG" id="COG0361">
    <property type="taxonomic scope" value="Bacteria"/>
</dbReference>
<dbReference type="HOGENOM" id="CLU_151267_1_0_7"/>
<dbReference type="OrthoDB" id="9803250at2"/>
<dbReference type="Proteomes" id="UP000002534">
    <property type="component" value="Chromosome"/>
</dbReference>
<dbReference type="GO" id="GO:0005829">
    <property type="term" value="C:cytosol"/>
    <property type="evidence" value="ECO:0007669"/>
    <property type="project" value="TreeGrafter"/>
</dbReference>
<dbReference type="GO" id="GO:0043022">
    <property type="term" value="F:ribosome binding"/>
    <property type="evidence" value="ECO:0007669"/>
    <property type="project" value="UniProtKB-UniRule"/>
</dbReference>
<dbReference type="GO" id="GO:0019843">
    <property type="term" value="F:rRNA binding"/>
    <property type="evidence" value="ECO:0007669"/>
    <property type="project" value="UniProtKB-UniRule"/>
</dbReference>
<dbReference type="GO" id="GO:0003743">
    <property type="term" value="F:translation initiation factor activity"/>
    <property type="evidence" value="ECO:0007669"/>
    <property type="project" value="UniProtKB-UniRule"/>
</dbReference>
<dbReference type="CDD" id="cd04451">
    <property type="entry name" value="S1_IF1"/>
    <property type="match status" value="1"/>
</dbReference>
<dbReference type="FunFam" id="2.40.50.140:FF:000002">
    <property type="entry name" value="Translation initiation factor IF-1"/>
    <property type="match status" value="1"/>
</dbReference>
<dbReference type="Gene3D" id="2.40.50.140">
    <property type="entry name" value="Nucleic acid-binding proteins"/>
    <property type="match status" value="1"/>
</dbReference>
<dbReference type="HAMAP" id="MF_00075">
    <property type="entry name" value="IF_1"/>
    <property type="match status" value="1"/>
</dbReference>
<dbReference type="InterPro" id="IPR012340">
    <property type="entry name" value="NA-bd_OB-fold"/>
</dbReference>
<dbReference type="InterPro" id="IPR006196">
    <property type="entry name" value="RNA-binding_domain_S1_IF1"/>
</dbReference>
<dbReference type="InterPro" id="IPR003029">
    <property type="entry name" value="S1_domain"/>
</dbReference>
<dbReference type="InterPro" id="IPR004368">
    <property type="entry name" value="TIF_IF1"/>
</dbReference>
<dbReference type="NCBIfam" id="TIGR00008">
    <property type="entry name" value="infA"/>
    <property type="match status" value="1"/>
</dbReference>
<dbReference type="PANTHER" id="PTHR33370">
    <property type="entry name" value="TRANSLATION INITIATION FACTOR IF-1, CHLOROPLASTIC"/>
    <property type="match status" value="1"/>
</dbReference>
<dbReference type="PANTHER" id="PTHR33370:SF1">
    <property type="entry name" value="TRANSLATION INITIATION FACTOR IF-1, CHLOROPLASTIC"/>
    <property type="match status" value="1"/>
</dbReference>
<dbReference type="Pfam" id="PF01176">
    <property type="entry name" value="eIF-1a"/>
    <property type="match status" value="1"/>
</dbReference>
<dbReference type="SMART" id="SM00316">
    <property type="entry name" value="S1"/>
    <property type="match status" value="1"/>
</dbReference>
<dbReference type="SUPFAM" id="SSF50249">
    <property type="entry name" value="Nucleic acid-binding proteins"/>
    <property type="match status" value="1"/>
</dbReference>
<dbReference type="PROSITE" id="PS50832">
    <property type="entry name" value="S1_IF1_TYPE"/>
    <property type="match status" value="1"/>
</dbReference>
<protein>
    <recommendedName>
        <fullName evidence="1">Translation initiation factor IF-1</fullName>
    </recommendedName>
</protein>
<evidence type="ECO:0000255" key="1">
    <source>
        <dbReference type="HAMAP-Rule" id="MF_00075"/>
    </source>
</evidence>
<name>IF1_SYNC1</name>
<accession>Q3A4P9</accession>
<proteinExistence type="inferred from homology"/>